<sequence length="199" mass="22351">MNIEKTLSVQKREGYGKGPSGRLRAQKLIPGVFYTPKGENISVQAPALPLQKIYEEMGHTTVFNLEIEENGQKTAYPVLIWQVQFHPYKRAFTHIDFYGVDLDKEVTVDVPVEFVGTSRGVKLGGVLETYREMVRLTSKPLNMPQKITVDVTDMGINDTISVGDLKLPENVRAEFDQNYALVTVISKSKDDAEEEGDED</sequence>
<dbReference type="EMBL" id="CP001358">
    <property type="protein sequence ID" value="ACL49354.1"/>
    <property type="molecule type" value="Genomic_DNA"/>
</dbReference>
<dbReference type="SMR" id="B8J0S7"/>
<dbReference type="STRING" id="525146.Ddes_1452"/>
<dbReference type="KEGG" id="dds:Ddes_1452"/>
<dbReference type="eggNOG" id="COG1825">
    <property type="taxonomic scope" value="Bacteria"/>
</dbReference>
<dbReference type="HOGENOM" id="CLU_075939_2_0_7"/>
<dbReference type="GO" id="GO:0022625">
    <property type="term" value="C:cytosolic large ribosomal subunit"/>
    <property type="evidence" value="ECO:0007669"/>
    <property type="project" value="TreeGrafter"/>
</dbReference>
<dbReference type="GO" id="GO:0008097">
    <property type="term" value="F:5S rRNA binding"/>
    <property type="evidence" value="ECO:0007669"/>
    <property type="project" value="InterPro"/>
</dbReference>
<dbReference type="GO" id="GO:0003735">
    <property type="term" value="F:structural constituent of ribosome"/>
    <property type="evidence" value="ECO:0007669"/>
    <property type="project" value="InterPro"/>
</dbReference>
<dbReference type="GO" id="GO:0006412">
    <property type="term" value="P:translation"/>
    <property type="evidence" value="ECO:0007669"/>
    <property type="project" value="UniProtKB-UniRule"/>
</dbReference>
<dbReference type="CDD" id="cd00495">
    <property type="entry name" value="Ribosomal_L25_TL5_CTC"/>
    <property type="match status" value="1"/>
</dbReference>
<dbReference type="Gene3D" id="2.170.120.20">
    <property type="entry name" value="Ribosomal protein L25, beta domain"/>
    <property type="match status" value="1"/>
</dbReference>
<dbReference type="Gene3D" id="2.40.240.10">
    <property type="entry name" value="Ribosomal Protein L25, Chain P"/>
    <property type="match status" value="1"/>
</dbReference>
<dbReference type="HAMAP" id="MF_01334">
    <property type="entry name" value="Ribosomal_bL25_CTC"/>
    <property type="match status" value="1"/>
</dbReference>
<dbReference type="InterPro" id="IPR020056">
    <property type="entry name" value="Rbsml_bL25/Gln-tRNA_synth_N"/>
</dbReference>
<dbReference type="InterPro" id="IPR011035">
    <property type="entry name" value="Ribosomal_bL25/Gln-tRNA_synth"/>
</dbReference>
<dbReference type="InterPro" id="IPR020057">
    <property type="entry name" value="Ribosomal_bL25_b-dom"/>
</dbReference>
<dbReference type="InterPro" id="IPR037121">
    <property type="entry name" value="Ribosomal_bL25_C"/>
</dbReference>
<dbReference type="InterPro" id="IPR001021">
    <property type="entry name" value="Ribosomal_bL25_long"/>
</dbReference>
<dbReference type="InterPro" id="IPR029751">
    <property type="entry name" value="Ribosomal_L25_dom"/>
</dbReference>
<dbReference type="InterPro" id="IPR020930">
    <property type="entry name" value="Ribosomal_uL5_bac-type"/>
</dbReference>
<dbReference type="NCBIfam" id="TIGR00731">
    <property type="entry name" value="bL25_bact_ctc"/>
    <property type="match status" value="1"/>
</dbReference>
<dbReference type="NCBIfam" id="NF004135">
    <property type="entry name" value="PRK05618.3-1"/>
    <property type="match status" value="1"/>
</dbReference>
<dbReference type="PANTHER" id="PTHR33284">
    <property type="entry name" value="RIBOSOMAL PROTEIN L25/GLN-TRNA SYNTHETASE, ANTI-CODON-BINDING DOMAIN-CONTAINING PROTEIN"/>
    <property type="match status" value="1"/>
</dbReference>
<dbReference type="PANTHER" id="PTHR33284:SF1">
    <property type="entry name" value="RIBOSOMAL PROTEIN L25_GLN-TRNA SYNTHETASE, ANTI-CODON-BINDING DOMAIN-CONTAINING PROTEIN"/>
    <property type="match status" value="1"/>
</dbReference>
<dbReference type="Pfam" id="PF01386">
    <property type="entry name" value="Ribosomal_L25p"/>
    <property type="match status" value="1"/>
</dbReference>
<dbReference type="Pfam" id="PF14693">
    <property type="entry name" value="Ribosomal_TL5_C"/>
    <property type="match status" value="1"/>
</dbReference>
<dbReference type="SUPFAM" id="SSF50715">
    <property type="entry name" value="Ribosomal protein L25-like"/>
    <property type="match status" value="1"/>
</dbReference>
<organism>
    <name type="scientific">Desulfovibrio desulfuricans (strain ATCC 27774 / DSM 6949 / MB)</name>
    <dbReference type="NCBI Taxonomy" id="525146"/>
    <lineage>
        <taxon>Bacteria</taxon>
        <taxon>Pseudomonadati</taxon>
        <taxon>Thermodesulfobacteriota</taxon>
        <taxon>Desulfovibrionia</taxon>
        <taxon>Desulfovibrionales</taxon>
        <taxon>Desulfovibrionaceae</taxon>
        <taxon>Desulfovibrio</taxon>
    </lineage>
</organism>
<comment type="function">
    <text evidence="1">This is one of the proteins that binds to the 5S RNA in the ribosome where it forms part of the central protuberance.</text>
</comment>
<comment type="subunit">
    <text evidence="1">Part of the 50S ribosomal subunit; part of the 5S rRNA/L5/L18/L25 subcomplex. Contacts the 5S rRNA. Binds to the 5S rRNA independently of L5 and L18.</text>
</comment>
<comment type="similarity">
    <text evidence="1">Belongs to the bacterial ribosomal protein bL25 family. CTC subfamily.</text>
</comment>
<proteinExistence type="inferred from homology"/>
<accession>B8J0S7</accession>
<protein>
    <recommendedName>
        <fullName evidence="1">Large ribosomal subunit protein bL25</fullName>
    </recommendedName>
    <alternativeName>
        <fullName evidence="3">50S ribosomal protein L25</fullName>
    </alternativeName>
    <alternativeName>
        <fullName evidence="1">General stress protein CTC</fullName>
    </alternativeName>
</protein>
<gene>
    <name evidence="1" type="primary">rplY</name>
    <name evidence="1" type="synonym">ctc</name>
    <name type="ordered locus">Ddes_1452</name>
</gene>
<name>RL25_DESDA</name>
<evidence type="ECO:0000255" key="1">
    <source>
        <dbReference type="HAMAP-Rule" id="MF_01334"/>
    </source>
</evidence>
<evidence type="ECO:0000256" key="2">
    <source>
        <dbReference type="SAM" id="MobiDB-lite"/>
    </source>
</evidence>
<evidence type="ECO:0000305" key="3"/>
<feature type="chain" id="PRO_1000166168" description="Large ribosomal subunit protein bL25">
    <location>
        <begin position="1"/>
        <end position="199"/>
    </location>
</feature>
<feature type="region of interest" description="Disordered" evidence="2">
    <location>
        <begin position="1"/>
        <end position="21"/>
    </location>
</feature>
<reference key="1">
    <citation type="submission" date="2009-01" db="EMBL/GenBank/DDBJ databases">
        <title>Complete sequence of Desulfovibrio desulfuricans subsp. desulfuricans str. ATCC 27774.</title>
        <authorList>
            <consortium name="US DOE Joint Genome Institute"/>
            <person name="Lucas S."/>
            <person name="Copeland A."/>
            <person name="Lapidus A."/>
            <person name="Glavina del Rio T."/>
            <person name="Tice H."/>
            <person name="Bruce D."/>
            <person name="Goodwin L."/>
            <person name="Pitluck S."/>
            <person name="Sims D."/>
            <person name="Lu M."/>
            <person name="Kiss H."/>
            <person name="Meineke L."/>
            <person name="Brettin T."/>
            <person name="Detter J.C."/>
            <person name="Han C."/>
            <person name="Larimer F."/>
            <person name="Land M."/>
            <person name="Hauser L."/>
            <person name="Kyrpides N."/>
            <person name="Ovchinnikova G."/>
            <person name="Hazen T.C."/>
        </authorList>
    </citation>
    <scope>NUCLEOTIDE SEQUENCE [LARGE SCALE GENOMIC DNA]</scope>
    <source>
        <strain>ATCC 27774 / DSM 6949 / MB</strain>
    </source>
</reference>
<keyword id="KW-0687">Ribonucleoprotein</keyword>
<keyword id="KW-0689">Ribosomal protein</keyword>
<keyword id="KW-0694">RNA-binding</keyword>
<keyword id="KW-0699">rRNA-binding</keyword>